<dbReference type="EC" id="2.3.1.15" evidence="1"/>
<dbReference type="EC" id="2.3.1.n5" evidence="1"/>
<dbReference type="EMBL" id="AM933172">
    <property type="protein sequence ID" value="CAR34625.1"/>
    <property type="molecule type" value="Genomic_DNA"/>
</dbReference>
<dbReference type="RefSeq" id="WP_001272784.1">
    <property type="nucleotide sequence ID" value="NC_011294.1"/>
</dbReference>
<dbReference type="SMR" id="B5QZ43"/>
<dbReference type="KEGG" id="set:SEN3049"/>
<dbReference type="HOGENOM" id="CLU_081254_0_2_6"/>
<dbReference type="UniPathway" id="UPA00085"/>
<dbReference type="Proteomes" id="UP000000613">
    <property type="component" value="Chromosome"/>
</dbReference>
<dbReference type="GO" id="GO:0005886">
    <property type="term" value="C:plasma membrane"/>
    <property type="evidence" value="ECO:0007669"/>
    <property type="project" value="UniProtKB-SubCell"/>
</dbReference>
<dbReference type="GO" id="GO:0043772">
    <property type="term" value="F:acyl-phosphate glycerol-3-phosphate acyltransferase activity"/>
    <property type="evidence" value="ECO:0007669"/>
    <property type="project" value="InterPro"/>
</dbReference>
<dbReference type="GO" id="GO:0004366">
    <property type="term" value="F:glycerol-3-phosphate O-acyltransferase activity"/>
    <property type="evidence" value="ECO:0007669"/>
    <property type="project" value="UniProtKB-UniRule"/>
</dbReference>
<dbReference type="GO" id="GO:0008654">
    <property type="term" value="P:phospholipid biosynthetic process"/>
    <property type="evidence" value="ECO:0007669"/>
    <property type="project" value="UniProtKB-UniRule"/>
</dbReference>
<dbReference type="HAMAP" id="MF_01043">
    <property type="entry name" value="PlsY"/>
    <property type="match status" value="1"/>
</dbReference>
<dbReference type="InterPro" id="IPR003811">
    <property type="entry name" value="G3P_acylTferase_PlsY"/>
</dbReference>
<dbReference type="NCBIfam" id="TIGR00023">
    <property type="entry name" value="glycerol-3-phosphate 1-O-acyltransferase PlsY"/>
    <property type="match status" value="1"/>
</dbReference>
<dbReference type="PANTHER" id="PTHR30309:SF0">
    <property type="entry name" value="GLYCEROL-3-PHOSPHATE ACYLTRANSFERASE-RELATED"/>
    <property type="match status" value="1"/>
</dbReference>
<dbReference type="PANTHER" id="PTHR30309">
    <property type="entry name" value="INNER MEMBRANE PROTEIN YGIH"/>
    <property type="match status" value="1"/>
</dbReference>
<dbReference type="Pfam" id="PF02660">
    <property type="entry name" value="G3P_acyltransf"/>
    <property type="match status" value="1"/>
</dbReference>
<dbReference type="SMART" id="SM01207">
    <property type="entry name" value="G3P_acyltransf"/>
    <property type="match status" value="1"/>
</dbReference>
<sequence length="203" mass="21904">MSAIAPGMILFAYLCGSISSAILVCRIAGLPDPRESGSGNPGATNVLRIGGKGAAVAVLIFDILKGMLPVWGAYALGVTPFWLGLIAIAACLGHIWPVFFGFKGGKGVATAFGAIAPIGWDLTGVMAGTWLLTVLLSGYSSLGAIVSALIAPFYVWWFKPQFTFPVSMLSCLILLRHHDNIQRLWRRQETKIWTKLKKKRQKD</sequence>
<feature type="chain" id="PRO_1000136116" description="Glycerol-3-phosphate acyltransferase">
    <location>
        <begin position="1"/>
        <end position="203"/>
    </location>
</feature>
<feature type="topological domain" description="Periplasmic" evidence="1">
    <location>
        <begin position="1"/>
        <end position="3"/>
    </location>
</feature>
<feature type="transmembrane region" description="Helical" evidence="1">
    <location>
        <begin position="4"/>
        <end position="24"/>
    </location>
</feature>
<feature type="topological domain" description="Cytoplasmic" evidence="1">
    <location>
        <begin position="25"/>
        <end position="52"/>
    </location>
</feature>
<feature type="transmembrane region" description="Helical" evidence="1">
    <location>
        <begin position="53"/>
        <end position="73"/>
    </location>
</feature>
<feature type="topological domain" description="Periplasmic" evidence="1">
    <location>
        <begin position="74"/>
        <end position="80"/>
    </location>
</feature>
<feature type="transmembrane region" description="Helical" evidence="1">
    <location>
        <begin position="81"/>
        <end position="101"/>
    </location>
</feature>
<feature type="topological domain" description="Cytoplasmic" evidence="1">
    <location>
        <begin position="102"/>
        <end position="111"/>
    </location>
</feature>
<feature type="transmembrane region" description="Helical" evidence="1">
    <location>
        <begin position="112"/>
        <end position="132"/>
    </location>
</feature>
<feature type="topological domain" description="Periplasmic" evidence="1">
    <location>
        <begin position="133"/>
        <end position="137"/>
    </location>
</feature>
<feature type="transmembrane region" description="Helical" evidence="1">
    <location>
        <begin position="138"/>
        <end position="158"/>
    </location>
</feature>
<feature type="topological domain" description="Cytoplasmic" evidence="1">
    <location>
        <begin position="159"/>
        <end position="203"/>
    </location>
</feature>
<organism>
    <name type="scientific">Salmonella enteritidis PT4 (strain P125109)</name>
    <dbReference type="NCBI Taxonomy" id="550537"/>
    <lineage>
        <taxon>Bacteria</taxon>
        <taxon>Pseudomonadati</taxon>
        <taxon>Pseudomonadota</taxon>
        <taxon>Gammaproteobacteria</taxon>
        <taxon>Enterobacterales</taxon>
        <taxon>Enterobacteriaceae</taxon>
        <taxon>Salmonella</taxon>
    </lineage>
</organism>
<proteinExistence type="inferred from homology"/>
<evidence type="ECO:0000255" key="1">
    <source>
        <dbReference type="HAMAP-Rule" id="MF_01043"/>
    </source>
</evidence>
<reference key="1">
    <citation type="journal article" date="2008" name="Genome Res.">
        <title>Comparative genome analysis of Salmonella enteritidis PT4 and Salmonella gallinarum 287/91 provides insights into evolutionary and host adaptation pathways.</title>
        <authorList>
            <person name="Thomson N.R."/>
            <person name="Clayton D.J."/>
            <person name="Windhorst D."/>
            <person name="Vernikos G."/>
            <person name="Davidson S."/>
            <person name="Churcher C."/>
            <person name="Quail M.A."/>
            <person name="Stevens M."/>
            <person name="Jones M.A."/>
            <person name="Watson M."/>
            <person name="Barron A."/>
            <person name="Layton A."/>
            <person name="Pickard D."/>
            <person name="Kingsley R.A."/>
            <person name="Bignell A."/>
            <person name="Clark L."/>
            <person name="Harris B."/>
            <person name="Ormond D."/>
            <person name="Abdellah Z."/>
            <person name="Brooks K."/>
            <person name="Cherevach I."/>
            <person name="Chillingworth T."/>
            <person name="Woodward J."/>
            <person name="Norberczak H."/>
            <person name="Lord A."/>
            <person name="Arrowsmith C."/>
            <person name="Jagels K."/>
            <person name="Moule S."/>
            <person name="Mungall K."/>
            <person name="Saunders M."/>
            <person name="Whitehead S."/>
            <person name="Chabalgoity J.A."/>
            <person name="Maskell D."/>
            <person name="Humphreys T."/>
            <person name="Roberts M."/>
            <person name="Barrow P.A."/>
            <person name="Dougan G."/>
            <person name="Parkhill J."/>
        </authorList>
    </citation>
    <scope>NUCLEOTIDE SEQUENCE [LARGE SCALE GENOMIC DNA]</scope>
    <source>
        <strain>P125109</strain>
    </source>
</reference>
<keyword id="KW-0997">Cell inner membrane</keyword>
<keyword id="KW-1003">Cell membrane</keyword>
<keyword id="KW-0444">Lipid biosynthesis</keyword>
<keyword id="KW-0443">Lipid metabolism</keyword>
<keyword id="KW-0472">Membrane</keyword>
<keyword id="KW-0594">Phospholipid biosynthesis</keyword>
<keyword id="KW-1208">Phospholipid metabolism</keyword>
<keyword id="KW-0808">Transferase</keyword>
<keyword id="KW-0812">Transmembrane</keyword>
<keyword id="KW-1133">Transmembrane helix</keyword>
<accession>B5QZ43</accession>
<protein>
    <recommendedName>
        <fullName evidence="1">Glycerol-3-phosphate acyltransferase</fullName>
    </recommendedName>
    <alternativeName>
        <fullName evidence="1">G3P acyltransferase</fullName>
        <shortName evidence="1">GPAT</shortName>
        <ecNumber evidence="1">2.3.1.15</ecNumber>
        <ecNumber evidence="1">2.3.1.n5</ecNumber>
    </alternativeName>
    <alternativeName>
        <fullName evidence="1">Lysophosphatidic acid synthase</fullName>
        <shortName evidence="1">LPA synthase</shortName>
    </alternativeName>
</protein>
<comment type="function">
    <text evidence="1">Catalyzes the transfer of an acyl group from acyl-ACP to glycerol-3-phosphate (G3P) to form lysophosphatidic acid (LPA). This enzyme can also utilize acyl-CoA as fatty acyl donor, but not acyl-PO(4).</text>
</comment>
<comment type="catalytic activity">
    <reaction evidence="1">
        <text>sn-glycerol 3-phosphate + an acyl-CoA = a 1-acyl-sn-glycero-3-phosphate + CoA</text>
        <dbReference type="Rhea" id="RHEA:15325"/>
        <dbReference type="ChEBI" id="CHEBI:57287"/>
        <dbReference type="ChEBI" id="CHEBI:57597"/>
        <dbReference type="ChEBI" id="CHEBI:57970"/>
        <dbReference type="ChEBI" id="CHEBI:58342"/>
        <dbReference type="EC" id="2.3.1.15"/>
    </reaction>
</comment>
<comment type="catalytic activity">
    <reaction evidence="1">
        <text>a fatty acyl-[ACP] + sn-glycerol 3-phosphate = a 1-acyl-sn-glycero-3-phosphate + holo-[ACP]</text>
        <dbReference type="Rhea" id="RHEA:42300"/>
        <dbReference type="Rhea" id="RHEA-COMP:9685"/>
        <dbReference type="Rhea" id="RHEA-COMP:14125"/>
        <dbReference type="ChEBI" id="CHEBI:57597"/>
        <dbReference type="ChEBI" id="CHEBI:57970"/>
        <dbReference type="ChEBI" id="CHEBI:64479"/>
        <dbReference type="ChEBI" id="CHEBI:138651"/>
        <dbReference type="EC" id="2.3.1.n5"/>
    </reaction>
</comment>
<comment type="pathway">
    <text evidence="1">Lipid metabolism; phospholipid metabolism.</text>
</comment>
<comment type="subunit">
    <text evidence="1">Probably interacts with PlsX.</text>
</comment>
<comment type="subcellular location">
    <subcellularLocation>
        <location evidence="1">Cell inner membrane</location>
        <topology evidence="1">Multi-pass membrane protein</topology>
    </subcellularLocation>
</comment>
<comment type="similarity">
    <text evidence="1">Belongs to the PlsY family.</text>
</comment>
<name>PLSY_SALEP</name>
<gene>
    <name evidence="1" type="primary">plsY</name>
    <name type="synonym">ygiH</name>
    <name type="ordered locus">SEN3049</name>
</gene>